<proteinExistence type="evidence at protein level"/>
<sequence>MIAPDTSVLVAGFATWHEGHEAAVRALNRGVHLIAHAAVETYSVLTRLPPPHRIAPVAVHAYLADITSSNYLALDACSYRGLTDHLAEHDVTGGATYDALVGFTAKAAGAKLLTRDLRAVETYERLRVEVELVT</sequence>
<gene>
    <name evidence="1" type="primary">vapC40</name>
    <name type="synonym">vapC-mt25</name>
    <name type="ordered locus">Rv2596</name>
    <name type="ORF">MTCY227.05c</name>
</gene>
<protein>
    <recommendedName>
        <fullName evidence="1">Ribonuclease VapC40</fullName>
        <shortName evidence="1">RNase VapC40</shortName>
        <ecNumber evidence="1">3.1.-.-</ecNumber>
    </recommendedName>
    <alternativeName>
        <fullName evidence="1">Toxin VapC40</fullName>
    </alternativeName>
</protein>
<organism>
    <name type="scientific">Mycobacterium tuberculosis (strain ATCC 25618 / H37Rv)</name>
    <dbReference type="NCBI Taxonomy" id="83332"/>
    <lineage>
        <taxon>Bacteria</taxon>
        <taxon>Bacillati</taxon>
        <taxon>Actinomycetota</taxon>
        <taxon>Actinomycetes</taxon>
        <taxon>Mycobacteriales</taxon>
        <taxon>Mycobacteriaceae</taxon>
        <taxon>Mycobacterium</taxon>
        <taxon>Mycobacterium tuberculosis complex</taxon>
    </lineage>
</organism>
<accession>P9WF61</accession>
<accession>L0TD12</accession>
<accession>Q50625</accession>
<comment type="function">
    <text evidence="1">Toxic component of a type II toxin-antitoxin (TA) system. An RNase (By similarity). Its cognate antitoxin is VapB40.</text>
</comment>
<comment type="cofactor">
    <cofactor evidence="1">
        <name>Mg(2+)</name>
        <dbReference type="ChEBI" id="CHEBI:18420"/>
    </cofactor>
</comment>
<comment type="subunit">
    <text evidence="2">Physically interacts with non-cognate antitoxin VapB27 and cognate antitoxin VapB40.</text>
</comment>
<comment type="similarity">
    <text evidence="1">Belongs to the PINc/VapC protein family.</text>
</comment>
<comment type="caution">
    <text evidence="3">Bioinformatics programs predicts this could have a signal sequence.</text>
</comment>
<dbReference type="EC" id="3.1.-.-" evidence="1"/>
<dbReference type="EMBL" id="AL123456">
    <property type="protein sequence ID" value="CCP45392.1"/>
    <property type="molecule type" value="Genomic_DNA"/>
</dbReference>
<dbReference type="PIR" id="C70727">
    <property type="entry name" value="C70727"/>
</dbReference>
<dbReference type="RefSeq" id="NP_217112.1">
    <property type="nucleotide sequence ID" value="NC_000962.3"/>
</dbReference>
<dbReference type="RefSeq" id="WP_003899389.1">
    <property type="nucleotide sequence ID" value="NZ_NVQJ01000023.1"/>
</dbReference>
<dbReference type="SMR" id="P9WF61"/>
<dbReference type="STRING" id="83332.Rv2596"/>
<dbReference type="PaxDb" id="83332-Rv2596"/>
<dbReference type="DNASU" id="888218"/>
<dbReference type="GeneID" id="888218"/>
<dbReference type="KEGG" id="mtu:Rv2596"/>
<dbReference type="KEGG" id="mtv:RVBD_2596"/>
<dbReference type="TubercuList" id="Rv2596"/>
<dbReference type="eggNOG" id="COG1848">
    <property type="taxonomic scope" value="Bacteria"/>
</dbReference>
<dbReference type="InParanoid" id="P9WF61"/>
<dbReference type="OrthoDB" id="25693at2"/>
<dbReference type="PhylomeDB" id="P9WF61"/>
<dbReference type="Proteomes" id="UP000001584">
    <property type="component" value="Chromosome"/>
</dbReference>
<dbReference type="GO" id="GO:0000287">
    <property type="term" value="F:magnesium ion binding"/>
    <property type="evidence" value="ECO:0007669"/>
    <property type="project" value="UniProtKB-UniRule"/>
</dbReference>
<dbReference type="GO" id="GO:0004540">
    <property type="term" value="F:RNA nuclease activity"/>
    <property type="evidence" value="ECO:0007669"/>
    <property type="project" value="InterPro"/>
</dbReference>
<dbReference type="CDD" id="cd18681">
    <property type="entry name" value="PIN_MtVapC27-VapC40_like"/>
    <property type="match status" value="1"/>
</dbReference>
<dbReference type="Gene3D" id="3.40.50.1010">
    <property type="entry name" value="5'-nuclease"/>
    <property type="match status" value="1"/>
</dbReference>
<dbReference type="HAMAP" id="MF_00265">
    <property type="entry name" value="VapC_Nob1"/>
    <property type="match status" value="1"/>
</dbReference>
<dbReference type="InterPro" id="IPR029060">
    <property type="entry name" value="PIN-like_dom_sf"/>
</dbReference>
<dbReference type="InterPro" id="IPR002716">
    <property type="entry name" value="PIN_dom"/>
</dbReference>
<dbReference type="InterPro" id="IPR022907">
    <property type="entry name" value="VapC_family"/>
</dbReference>
<dbReference type="Pfam" id="PF01850">
    <property type="entry name" value="PIN"/>
    <property type="match status" value="1"/>
</dbReference>
<dbReference type="SUPFAM" id="SSF88723">
    <property type="entry name" value="PIN domain-like"/>
    <property type="match status" value="1"/>
</dbReference>
<evidence type="ECO:0000255" key="1">
    <source>
        <dbReference type="HAMAP-Rule" id="MF_00265"/>
    </source>
</evidence>
<evidence type="ECO:0000269" key="2">
    <source>
    </source>
</evidence>
<evidence type="ECO:0000305" key="3"/>
<name>VPC40_MYCTU</name>
<keyword id="KW-0378">Hydrolase</keyword>
<keyword id="KW-0460">Magnesium</keyword>
<keyword id="KW-0479">Metal-binding</keyword>
<keyword id="KW-0540">Nuclease</keyword>
<keyword id="KW-1185">Reference proteome</keyword>
<keyword id="KW-1277">Toxin-antitoxin system</keyword>
<feature type="chain" id="PRO_0000014142" description="Ribonuclease VapC40">
    <location>
        <begin position="1"/>
        <end position="134"/>
    </location>
</feature>
<feature type="domain" description="PINc" evidence="1">
    <location>
        <begin position="3"/>
        <end position="126"/>
    </location>
</feature>
<feature type="binding site" evidence="1">
    <location>
        <position position="5"/>
    </location>
    <ligand>
        <name>Mg(2+)</name>
        <dbReference type="ChEBI" id="CHEBI:18420"/>
    </ligand>
</feature>
<feature type="binding site" evidence="1">
    <location>
        <position position="98"/>
    </location>
    <ligand>
        <name>Mg(2+)</name>
        <dbReference type="ChEBI" id="CHEBI:18420"/>
    </ligand>
</feature>
<reference key="1">
    <citation type="journal article" date="1998" name="Nature">
        <title>Deciphering the biology of Mycobacterium tuberculosis from the complete genome sequence.</title>
        <authorList>
            <person name="Cole S.T."/>
            <person name="Brosch R."/>
            <person name="Parkhill J."/>
            <person name="Garnier T."/>
            <person name="Churcher C.M."/>
            <person name="Harris D.E."/>
            <person name="Gordon S.V."/>
            <person name="Eiglmeier K."/>
            <person name="Gas S."/>
            <person name="Barry C.E. III"/>
            <person name="Tekaia F."/>
            <person name="Badcock K."/>
            <person name="Basham D."/>
            <person name="Brown D."/>
            <person name="Chillingworth T."/>
            <person name="Connor R."/>
            <person name="Davies R.M."/>
            <person name="Devlin K."/>
            <person name="Feltwell T."/>
            <person name="Gentles S."/>
            <person name="Hamlin N."/>
            <person name="Holroyd S."/>
            <person name="Hornsby T."/>
            <person name="Jagels K."/>
            <person name="Krogh A."/>
            <person name="McLean J."/>
            <person name="Moule S."/>
            <person name="Murphy L.D."/>
            <person name="Oliver S."/>
            <person name="Osborne J."/>
            <person name="Quail M.A."/>
            <person name="Rajandream M.A."/>
            <person name="Rogers J."/>
            <person name="Rutter S."/>
            <person name="Seeger K."/>
            <person name="Skelton S."/>
            <person name="Squares S."/>
            <person name="Squares R."/>
            <person name="Sulston J.E."/>
            <person name="Taylor K."/>
            <person name="Whitehead S."/>
            <person name="Barrell B.G."/>
        </authorList>
    </citation>
    <scope>NUCLEOTIDE SEQUENCE [LARGE SCALE GENOMIC DNA]</scope>
    <source>
        <strain>ATCC 25618 / H37Rv</strain>
    </source>
</reference>
<reference key="2">
    <citation type="journal article" date="2010" name="J. Biol. Chem.">
        <title>Noncognate Mycobacterium tuberculosis toxin-antitoxins can physically and functionally interact.</title>
        <authorList>
            <person name="Zhu L."/>
            <person name="Sharp J.D."/>
            <person name="Kobayashi H."/>
            <person name="Woychik N.A."/>
            <person name="Inouye M."/>
        </authorList>
    </citation>
    <scope>INTERACTION WITH ANTITOXINS VAPB27 AND VAPB40</scope>
    <source>
        <strain>ATCC 25618 / H37Rv</strain>
    </source>
</reference>
<reference key="3">
    <citation type="journal article" date="2011" name="Mol. Cell. Proteomics">
        <title>Proteogenomic analysis of Mycobacterium tuberculosis by high resolution mass spectrometry.</title>
        <authorList>
            <person name="Kelkar D.S."/>
            <person name="Kumar D."/>
            <person name="Kumar P."/>
            <person name="Balakrishnan L."/>
            <person name="Muthusamy B."/>
            <person name="Yadav A.K."/>
            <person name="Shrivastava P."/>
            <person name="Marimuthu A."/>
            <person name="Anand S."/>
            <person name="Sundaram H."/>
            <person name="Kingsbury R."/>
            <person name="Harsha H.C."/>
            <person name="Nair B."/>
            <person name="Prasad T.S."/>
            <person name="Chauhan D.S."/>
            <person name="Katoch K."/>
            <person name="Katoch V.M."/>
            <person name="Kumar P."/>
            <person name="Chaerkady R."/>
            <person name="Ramachandran S."/>
            <person name="Dash D."/>
            <person name="Pandey A."/>
        </authorList>
    </citation>
    <scope>IDENTIFICATION BY MASS SPECTROMETRY [LARGE SCALE ANALYSIS]</scope>
    <source>
        <strain>ATCC 25618 / H37Rv</strain>
    </source>
</reference>